<comment type="function">
    <text evidence="2">Catalyzes the first step of the methylation pathway of phosphatidylcholine biosynthesis, the SAM-dependent methylation of phosphatidylethanolamine (PE) to phosphatidylmonomethylethanolamine (PMME).</text>
</comment>
<comment type="catalytic activity">
    <reaction evidence="2">
        <text>a 1,2-diacyl-sn-glycero-3-phosphoethanolamine + S-adenosyl-L-methionine = a 1,2-diacyl-sn-glycero-3-phospho-N-methylethanolamine + S-adenosyl-L-homocysteine + H(+)</text>
        <dbReference type="Rhea" id="RHEA:11164"/>
        <dbReference type="ChEBI" id="CHEBI:15378"/>
        <dbReference type="ChEBI" id="CHEBI:57856"/>
        <dbReference type="ChEBI" id="CHEBI:59789"/>
        <dbReference type="ChEBI" id="CHEBI:64573"/>
        <dbReference type="ChEBI" id="CHEBI:64612"/>
        <dbReference type="EC" id="2.1.1.17"/>
    </reaction>
</comment>
<comment type="pathway">
    <text evidence="2">Phospholipid metabolism; phosphatidylcholine biosynthesis.</text>
</comment>
<comment type="subcellular location">
    <subcellularLocation>
        <location evidence="2">Endoplasmic reticulum membrane</location>
        <topology evidence="2">Multi-pass membrane protein</topology>
    </subcellularLocation>
</comment>
<comment type="similarity">
    <text evidence="2">Belongs to the class VI-like SAM-binding methyltransferase superfamily. CHO2 family.</text>
</comment>
<gene>
    <name type="primary">CHO2</name>
    <name type="ORF">EC1118_1G1_4786g</name>
</gene>
<keyword id="KW-0007">Acetylation</keyword>
<keyword id="KW-0256">Endoplasmic reticulum</keyword>
<keyword id="KW-0444">Lipid biosynthesis</keyword>
<keyword id="KW-0443">Lipid metabolism</keyword>
<keyword id="KW-0472">Membrane</keyword>
<keyword id="KW-0489">Methyltransferase</keyword>
<keyword id="KW-0594">Phospholipid biosynthesis</keyword>
<keyword id="KW-1208">Phospholipid metabolism</keyword>
<keyword id="KW-0949">S-adenosyl-L-methionine</keyword>
<keyword id="KW-0808">Transferase</keyword>
<keyword id="KW-0812">Transmembrane</keyword>
<keyword id="KW-1133">Transmembrane helix</keyword>
<feature type="initiator methionine" description="Removed" evidence="1">
    <location>
        <position position="1"/>
    </location>
</feature>
<feature type="chain" id="PRO_0000405914" description="Phosphatidylethanolamine N-methyltransferase">
    <location>
        <begin position="2"/>
        <end position="869"/>
    </location>
</feature>
<feature type="topological domain" description="Lumenal" evidence="2">
    <location>
        <begin position="2"/>
        <end position="55"/>
    </location>
</feature>
<feature type="transmembrane region" description="Helical" evidence="2">
    <location>
        <begin position="56"/>
        <end position="76"/>
    </location>
</feature>
<feature type="topological domain" description="Cytoplasmic" evidence="2">
    <location>
        <begin position="77"/>
        <end position="86"/>
    </location>
</feature>
<feature type="transmembrane region" description="Helical" evidence="2">
    <location>
        <begin position="87"/>
        <end position="107"/>
    </location>
</feature>
<feature type="topological domain" description="Lumenal" evidence="2">
    <location>
        <begin position="108"/>
        <end position="187"/>
    </location>
</feature>
<feature type="transmembrane region" description="Helical" evidence="2">
    <location>
        <begin position="188"/>
        <end position="208"/>
    </location>
</feature>
<feature type="topological domain" description="Cytoplasmic" evidence="2">
    <location>
        <begin position="209"/>
        <end position="212"/>
    </location>
</feature>
<feature type="transmembrane region" description="Helical" evidence="2">
    <location>
        <begin position="213"/>
        <end position="233"/>
    </location>
</feature>
<feature type="topological domain" description="Lumenal" evidence="2">
    <location>
        <begin position="234"/>
        <end position="258"/>
    </location>
</feature>
<feature type="transmembrane region" description="Helical" evidence="2">
    <location>
        <begin position="259"/>
        <end position="279"/>
    </location>
</feature>
<feature type="topological domain" description="Cytoplasmic" evidence="2">
    <location>
        <begin position="280"/>
        <end position="291"/>
    </location>
</feature>
<feature type="transmembrane region" description="Helical" evidence="2">
    <location>
        <begin position="292"/>
        <end position="310"/>
    </location>
</feature>
<feature type="topological domain" description="Lumenal" evidence="2">
    <location>
        <begin position="311"/>
        <end position="362"/>
    </location>
</feature>
<feature type="transmembrane region" description="Helical" evidence="2">
    <location>
        <begin position="363"/>
        <end position="383"/>
    </location>
</feature>
<feature type="topological domain" description="Cytoplasmic" evidence="2">
    <location>
        <begin position="384"/>
        <end position="390"/>
    </location>
</feature>
<feature type="transmembrane region" description="Helical" evidence="2">
    <location>
        <begin position="391"/>
        <end position="411"/>
    </location>
</feature>
<feature type="topological domain" description="Lumenal" evidence="2">
    <location>
        <begin position="412"/>
        <end position="439"/>
    </location>
</feature>
<feature type="transmembrane region" description="Helical" evidence="2">
    <location>
        <begin position="440"/>
        <end position="460"/>
    </location>
</feature>
<feature type="topological domain" description="Cytoplasmic" evidence="2">
    <location>
        <begin position="461"/>
        <end position="463"/>
    </location>
</feature>
<feature type="transmembrane region" description="Helical" evidence="2">
    <location>
        <begin position="464"/>
        <end position="484"/>
    </location>
</feature>
<feature type="topological domain" description="Lumenal" evidence="2">
    <location>
        <begin position="485"/>
        <end position="534"/>
    </location>
</feature>
<feature type="transmembrane region" description="Helical" evidence="2">
    <location>
        <begin position="535"/>
        <end position="555"/>
    </location>
</feature>
<feature type="topological domain" description="Cytoplasmic" evidence="2">
    <location>
        <begin position="556"/>
        <end position="869"/>
    </location>
</feature>
<feature type="modified residue" description="N-acetylserine" evidence="1">
    <location>
        <position position="2"/>
    </location>
</feature>
<accession>C8Z951</accession>
<evidence type="ECO:0000250" key="1">
    <source>
        <dbReference type="UniProtKB" id="P05374"/>
    </source>
</evidence>
<evidence type="ECO:0000255" key="2">
    <source>
        <dbReference type="HAMAP-Rule" id="MF_03217"/>
    </source>
</evidence>
<name>CHO2_YEAS8</name>
<sequence length="869" mass="101192">MSSCKTTLSEMVGSVTKDRGTINVKARTRSSNVTFKPPVTHDMVRSLFDPTLKKSLLEKCIALAIISNFFICYWVFQRFGLQFTKYFFLVQYLFWRIAYNLGIGLVLHYQSHYETLTNCAKTHAIFSKIPHNKDANSNFSTNSNSFSEKFWNFIRKFCQYEIRSKMPKEYDLFAYPEEINVWLIFRQFVDLILMQDFVTYIIYVYLSIPYSWVQIFNWRSLLGVILILFNIWVKLDAHRVVKDYAWYWGDFFFLEESELIFDGVFNISPHPMYSIGYLGYYGLSLICNDYKVLLVSVFGHYSQFLFLKYVENPHIERTYGDGIDSDSQMNSRIDDLISKENCDYSRPLINMGLSFNNFNKLRFTDYFTIGTVAALMLGTIMNARFINLNHLFITVFVTKLVSWLFISTILYKQSQSKWFTRLFLENGYTQVYSYEQWQFIYNYYLVLTYTLMIIYTGLQIWSNFSNINNSQLIFGLILVALQTWCDKETRLAISDFGWFYGDFFLSNYISTRKLTSQGIYRYLNHPEAVLGVVGVWGTVLMTNFAVTNIILAVLWTLTNFILVKFIETPHVNKIYGKTKRVSGVGKTLLGLKPLRQVSDIVNRIENIIIKSLIDESKNSNGGAELLPKNYQDNKEWNILIQEAMDSVATRLSPYCELKIENEQIETNFVLPTPVTLNWKMPIELYNGDDWIGLYKVIDTRADREKTRVGSGGHWSATSKDSYMNHGLRHKESVTEIKATEKYVQGKVTFDTSLLYFENGIYEFRYHSGNSHKVLLISTPFEISLPVLNTTTPELFEKDLTEFLTKVNVLKDGKFRPLGNKFFGMDSLKQLIKNSIGVELSSEYMRRVNGDAHVISHRAWDIKQTLDSLA</sequence>
<protein>
    <recommendedName>
        <fullName evidence="2">Phosphatidylethanolamine N-methyltransferase</fullName>
        <shortName evidence="2">PE methyltransferase</shortName>
        <shortName evidence="2">PEAMT</shortName>
        <shortName evidence="2">PEMT</shortName>
        <ecNumber evidence="2">2.1.1.17</ecNumber>
    </recommendedName>
</protein>
<reference key="1">
    <citation type="journal article" date="2009" name="Proc. Natl. Acad. Sci. U.S.A.">
        <title>Eukaryote-to-eukaryote gene transfer events revealed by the genome sequence of the wine yeast Saccharomyces cerevisiae EC1118.</title>
        <authorList>
            <person name="Novo M."/>
            <person name="Bigey F."/>
            <person name="Beyne E."/>
            <person name="Galeote V."/>
            <person name="Gavory F."/>
            <person name="Mallet S."/>
            <person name="Cambon B."/>
            <person name="Legras J.-L."/>
            <person name="Wincker P."/>
            <person name="Casaregola S."/>
            <person name="Dequin S."/>
        </authorList>
    </citation>
    <scope>NUCLEOTIDE SEQUENCE [LARGE SCALE GENOMIC DNA]</scope>
    <source>
        <strain>Lalvin EC1118 / Prise de mousse</strain>
    </source>
</reference>
<proteinExistence type="inferred from homology"/>
<organism>
    <name type="scientific">Saccharomyces cerevisiae (strain Lalvin EC1118 / Prise de mousse)</name>
    <name type="common">Baker's yeast</name>
    <dbReference type="NCBI Taxonomy" id="643680"/>
    <lineage>
        <taxon>Eukaryota</taxon>
        <taxon>Fungi</taxon>
        <taxon>Dikarya</taxon>
        <taxon>Ascomycota</taxon>
        <taxon>Saccharomycotina</taxon>
        <taxon>Saccharomycetes</taxon>
        <taxon>Saccharomycetales</taxon>
        <taxon>Saccharomycetaceae</taxon>
        <taxon>Saccharomyces</taxon>
    </lineage>
</organism>
<dbReference type="EC" id="2.1.1.17" evidence="2"/>
<dbReference type="EMBL" id="FN393070">
    <property type="protein sequence ID" value="CAY79917.1"/>
    <property type="molecule type" value="Genomic_DNA"/>
</dbReference>
<dbReference type="HOGENOM" id="CLU_005987_0_1_1"/>
<dbReference type="OrthoDB" id="20536at4893"/>
<dbReference type="UniPathway" id="UPA00753"/>
<dbReference type="Proteomes" id="UP000000286">
    <property type="component" value="Chromosome VII, Scaffold EC1118_1G1"/>
</dbReference>
<dbReference type="GO" id="GO:0005789">
    <property type="term" value="C:endoplasmic reticulum membrane"/>
    <property type="evidence" value="ECO:0007669"/>
    <property type="project" value="UniProtKB-SubCell"/>
</dbReference>
<dbReference type="GO" id="GO:0004608">
    <property type="term" value="F:phosphatidylethanolamine N-methyltransferase activity"/>
    <property type="evidence" value="ECO:0007669"/>
    <property type="project" value="UniProtKB-UniRule"/>
</dbReference>
<dbReference type="GO" id="GO:0032259">
    <property type="term" value="P:methylation"/>
    <property type="evidence" value="ECO:0007669"/>
    <property type="project" value="UniProtKB-KW"/>
</dbReference>
<dbReference type="GO" id="GO:0006656">
    <property type="term" value="P:phosphatidylcholine biosynthetic process"/>
    <property type="evidence" value="ECO:0007669"/>
    <property type="project" value="UniProtKB-UniRule"/>
</dbReference>
<dbReference type="FunFam" id="1.20.120.1630:FF:000016">
    <property type="entry name" value="Phosphatidylethanolamine N-methyltransferase"/>
    <property type="match status" value="1"/>
</dbReference>
<dbReference type="Gene3D" id="1.20.120.1630">
    <property type="match status" value="2"/>
</dbReference>
<dbReference type="Gene3D" id="2.60.40.2840">
    <property type="match status" value="1"/>
</dbReference>
<dbReference type="HAMAP" id="MF_03217">
    <property type="entry name" value="PEMT"/>
    <property type="match status" value="1"/>
</dbReference>
<dbReference type="InterPro" id="IPR007318">
    <property type="entry name" value="Phopholipid_MeTrfase"/>
</dbReference>
<dbReference type="InterPro" id="IPR016219">
    <property type="entry name" value="Phosphatid-EA_MeTrfase_fun"/>
</dbReference>
<dbReference type="PANTHER" id="PTHR32138">
    <property type="entry name" value="PHOSPHATIDYLETHANOLAMINE N-METHYLTRANSFERASE"/>
    <property type="match status" value="1"/>
</dbReference>
<dbReference type="PANTHER" id="PTHR32138:SF0">
    <property type="entry name" value="PHOSPHATIDYLETHANOLAMINE N-METHYLTRANSFERASE"/>
    <property type="match status" value="1"/>
</dbReference>
<dbReference type="Pfam" id="PF04191">
    <property type="entry name" value="PEMT"/>
    <property type="match status" value="2"/>
</dbReference>
<dbReference type="PIRSF" id="PIRSF000383">
    <property type="entry name" value="PEAMT"/>
    <property type="match status" value="1"/>
</dbReference>
<dbReference type="PROSITE" id="PS51598">
    <property type="entry name" value="SAM_CHO2"/>
    <property type="match status" value="1"/>
</dbReference>